<reference key="1">
    <citation type="journal article" date="1996" name="J. Biol. Chem.">
        <title>Characterization of a nuclear protein conferring brefeldin A resistance in Schizosaccharomyces pombe.</title>
        <authorList>
            <person name="Turi T.G."/>
            <person name="Mueller U.W."/>
            <person name="Sazer S."/>
            <person name="Rose J.K."/>
        </authorList>
    </citation>
    <scope>NUCLEOTIDE SEQUENCE [GENOMIC DNA]</scope>
    <scope>SUBCELLULAR LOCATION</scope>
    <scope>PHOSPHORYLATION</scope>
    <source>
        <strain>BAP1</strain>
    </source>
</reference>
<reference key="2">
    <citation type="journal article" date="1998" name="Mol. Gen. Genet.">
        <title>Cloning of caf1+, caf2+ and caf4+ from Schizosaccharomyces pombe: their involvement in multidrug resistance, UV and pH sensitivity.</title>
        <authorList>
            <person name="Benko Z."/>
            <person name="Sipiczki M."/>
            <person name="Carr A.M."/>
        </authorList>
    </citation>
    <scope>NUCLEOTIDE SEQUENCE [GENOMIC DNA]</scope>
</reference>
<reference key="3">
    <citation type="journal article" date="2002" name="Nature">
        <title>The genome sequence of Schizosaccharomyces pombe.</title>
        <authorList>
            <person name="Wood V."/>
            <person name="Gwilliam R."/>
            <person name="Rajandream M.A."/>
            <person name="Lyne M.H."/>
            <person name="Lyne R."/>
            <person name="Stewart A."/>
            <person name="Sgouros J.G."/>
            <person name="Peat N."/>
            <person name="Hayles J."/>
            <person name="Baker S.G."/>
            <person name="Basham D."/>
            <person name="Bowman S."/>
            <person name="Brooks K."/>
            <person name="Brown D."/>
            <person name="Brown S."/>
            <person name="Chillingworth T."/>
            <person name="Churcher C.M."/>
            <person name="Collins M."/>
            <person name="Connor R."/>
            <person name="Cronin A."/>
            <person name="Davis P."/>
            <person name="Feltwell T."/>
            <person name="Fraser A."/>
            <person name="Gentles S."/>
            <person name="Goble A."/>
            <person name="Hamlin N."/>
            <person name="Harris D.E."/>
            <person name="Hidalgo J."/>
            <person name="Hodgson G."/>
            <person name="Holroyd S."/>
            <person name="Hornsby T."/>
            <person name="Howarth S."/>
            <person name="Huckle E.J."/>
            <person name="Hunt S."/>
            <person name="Jagels K."/>
            <person name="James K.D."/>
            <person name="Jones L."/>
            <person name="Jones M."/>
            <person name="Leather S."/>
            <person name="McDonald S."/>
            <person name="McLean J."/>
            <person name="Mooney P."/>
            <person name="Moule S."/>
            <person name="Mungall K.L."/>
            <person name="Murphy L.D."/>
            <person name="Niblett D."/>
            <person name="Odell C."/>
            <person name="Oliver K."/>
            <person name="O'Neil S."/>
            <person name="Pearson D."/>
            <person name="Quail M.A."/>
            <person name="Rabbinowitsch E."/>
            <person name="Rutherford K.M."/>
            <person name="Rutter S."/>
            <person name="Saunders D."/>
            <person name="Seeger K."/>
            <person name="Sharp S."/>
            <person name="Skelton J."/>
            <person name="Simmonds M.N."/>
            <person name="Squares R."/>
            <person name="Squares S."/>
            <person name="Stevens K."/>
            <person name="Taylor K."/>
            <person name="Taylor R.G."/>
            <person name="Tivey A."/>
            <person name="Walsh S.V."/>
            <person name="Warren T."/>
            <person name="Whitehead S."/>
            <person name="Woodward J.R."/>
            <person name="Volckaert G."/>
            <person name="Aert R."/>
            <person name="Robben J."/>
            <person name="Grymonprez B."/>
            <person name="Weltjens I."/>
            <person name="Vanstreels E."/>
            <person name="Rieger M."/>
            <person name="Schaefer M."/>
            <person name="Mueller-Auer S."/>
            <person name="Gabel C."/>
            <person name="Fuchs M."/>
            <person name="Duesterhoeft A."/>
            <person name="Fritzc C."/>
            <person name="Holzer E."/>
            <person name="Moestl D."/>
            <person name="Hilbert H."/>
            <person name="Borzym K."/>
            <person name="Langer I."/>
            <person name="Beck A."/>
            <person name="Lehrach H."/>
            <person name="Reinhardt R."/>
            <person name="Pohl T.M."/>
            <person name="Eger P."/>
            <person name="Zimmermann W."/>
            <person name="Wedler H."/>
            <person name="Wambutt R."/>
            <person name="Purnelle B."/>
            <person name="Goffeau A."/>
            <person name="Cadieu E."/>
            <person name="Dreano S."/>
            <person name="Gloux S."/>
            <person name="Lelaure V."/>
            <person name="Mottier S."/>
            <person name="Galibert F."/>
            <person name="Aves S.J."/>
            <person name="Xiang Z."/>
            <person name="Hunt C."/>
            <person name="Moore K."/>
            <person name="Hurst S.M."/>
            <person name="Lucas M."/>
            <person name="Rochet M."/>
            <person name="Gaillardin C."/>
            <person name="Tallada V.A."/>
            <person name="Garzon A."/>
            <person name="Thode G."/>
            <person name="Daga R.R."/>
            <person name="Cruzado L."/>
            <person name="Jimenez J."/>
            <person name="Sanchez M."/>
            <person name="del Rey F."/>
            <person name="Benito J."/>
            <person name="Dominguez A."/>
            <person name="Revuelta J.L."/>
            <person name="Moreno S."/>
            <person name="Armstrong J."/>
            <person name="Forsburg S.L."/>
            <person name="Cerutti L."/>
            <person name="Lowe T."/>
            <person name="McCombie W.R."/>
            <person name="Paulsen I."/>
            <person name="Potashkin J."/>
            <person name="Shpakovski G.V."/>
            <person name="Ussery D."/>
            <person name="Barrell B.G."/>
            <person name="Nurse P."/>
        </authorList>
    </citation>
    <scope>NUCLEOTIDE SEQUENCE [LARGE SCALE GENOMIC DNA]</scope>
    <source>
        <strain>972 / ATCC 24843</strain>
    </source>
</reference>
<reference key="4">
    <citation type="journal article" date="2000" name="Genes Cells">
        <title>Large-scale screening of intracellular protein localization in living fission yeast cells by the use of a GFP-fusion genomic DNA library.</title>
        <authorList>
            <person name="Ding D.-Q."/>
            <person name="Tomita Y."/>
            <person name="Yamamoto A."/>
            <person name="Chikashige Y."/>
            <person name="Haraguchi T."/>
            <person name="Hiraoka Y."/>
        </authorList>
    </citation>
    <scope>NUCLEOTIDE SEQUENCE [LARGE SCALE GENOMIC DNA] OF 152-359</scope>
    <source>
        <strain>ATCC 38364 / 968</strain>
    </source>
</reference>
<accession>Q09146</accession>
<accession>Q9UU29</accession>
<feature type="chain" id="PRO_0000213673" description="Brefeldin A resistance protein">
    <location>
        <begin position="1"/>
        <end position="399"/>
    </location>
</feature>
<feature type="domain" description="RanBD1" evidence="1">
    <location>
        <begin position="256"/>
        <end position="396"/>
    </location>
</feature>
<feature type="region of interest" description="Disordered" evidence="2">
    <location>
        <begin position="1"/>
        <end position="173"/>
    </location>
</feature>
<feature type="region of interest" description="Disordered" evidence="2">
    <location>
        <begin position="191"/>
        <end position="269"/>
    </location>
</feature>
<feature type="compositionally biased region" description="Basic and acidic residues" evidence="2">
    <location>
        <begin position="1"/>
        <end position="31"/>
    </location>
</feature>
<feature type="compositionally biased region" description="Basic and acidic residues" evidence="2">
    <location>
        <begin position="49"/>
        <end position="69"/>
    </location>
</feature>
<feature type="compositionally biased region" description="Basic and acidic residues" evidence="2">
    <location>
        <begin position="101"/>
        <end position="130"/>
    </location>
</feature>
<feature type="compositionally biased region" description="Low complexity" evidence="2">
    <location>
        <begin position="138"/>
        <end position="157"/>
    </location>
</feature>
<feature type="compositionally biased region" description="Basic and acidic residues" evidence="2">
    <location>
        <begin position="205"/>
        <end position="217"/>
    </location>
</feature>
<feature type="compositionally biased region" description="Basic and acidic residues" evidence="2">
    <location>
        <begin position="241"/>
        <end position="252"/>
    </location>
</feature>
<feature type="compositionally biased region" description="Polar residues" evidence="2">
    <location>
        <begin position="253"/>
        <end position="263"/>
    </location>
</feature>
<keyword id="KW-0539">Nucleus</keyword>
<keyword id="KW-0597">Phosphoprotein</keyword>
<keyword id="KW-1185">Reference proteome</keyword>
<protein>
    <recommendedName>
        <fullName>Brefeldin A resistance protein</fullName>
    </recommendedName>
    <alternativeName>
        <fullName>Caffeine resistance protein 1</fullName>
    </alternativeName>
</protein>
<evidence type="ECO:0000255" key="1">
    <source>
        <dbReference type="PROSITE-ProRule" id="PRU00164"/>
    </source>
</evidence>
<evidence type="ECO:0000256" key="2">
    <source>
        <dbReference type="SAM" id="MobiDB-lite"/>
    </source>
</evidence>
<evidence type="ECO:0000269" key="3">
    <source>
    </source>
</evidence>
<comment type="subcellular location">
    <subcellularLocation>
        <location evidence="3">Nucleus</location>
    </subcellularLocation>
</comment>
<comment type="PTM">
    <text evidence="3">Phosphorylated.</text>
</comment>
<sequence length="399" mass="43201">MTSKMENNKDESISTKNALEEKSNETKDETSKRKHDPAEEESAVSTKVSKSEPLEDKGNAEVKEFKETTKSNGVKPEVEITESTKIQKESNTEPCISTGGKVEEKELKVNKDVDENEGHVAVETGKKESAAKPAASVSPFSQFASFSNASSPFSNVSTASSEPKEEKSAFGAFASSKSAFTMKSVKDSPFKKFAAGTAVETESGSGKEKENDKKSSENFDELLANTSAKAFENQKGSAGETKSEPKEADKGSGDSTKSTMHQLSDSEIITGEEEEESIFSVRARLYVVADEKKTWKERGQGILKVNVPKQRGSGSGRLLMRNDAVHRVIMNVPLFQGMSKKSLQIASASSGGSANYLKIFVIENGKSVLYAVRVKDNSLAEQLRNHVLEAIPKGGREDA</sequence>
<organism>
    <name type="scientific">Schizosaccharomyces pombe (strain 972 / ATCC 24843)</name>
    <name type="common">Fission yeast</name>
    <dbReference type="NCBI Taxonomy" id="284812"/>
    <lineage>
        <taxon>Eukaryota</taxon>
        <taxon>Fungi</taxon>
        <taxon>Dikarya</taxon>
        <taxon>Ascomycota</taxon>
        <taxon>Taphrinomycotina</taxon>
        <taxon>Schizosaccharomycetes</taxon>
        <taxon>Schizosaccharomycetales</taxon>
        <taxon>Schizosaccharomycetaceae</taxon>
        <taxon>Schizosaccharomyces</taxon>
    </lineage>
</organism>
<name>HBA1_SCHPO</name>
<proteinExistence type="evidence at protein level"/>
<gene>
    <name type="primary">hba1</name>
    <name type="synonym">caf1</name>
    <name type="ORF">SPBC365.13c</name>
</gene>
<dbReference type="EMBL" id="U38783">
    <property type="protein sequence ID" value="AAC49261.1"/>
    <property type="molecule type" value="Genomic_DNA"/>
</dbReference>
<dbReference type="EMBL" id="CU329671">
    <property type="protein sequence ID" value="CAB44765.1"/>
    <property type="molecule type" value="Genomic_DNA"/>
</dbReference>
<dbReference type="EMBL" id="AB027850">
    <property type="protein sequence ID" value="BAA87154.1"/>
    <property type="molecule type" value="Genomic_DNA"/>
</dbReference>
<dbReference type="PIR" id="T40320">
    <property type="entry name" value="T40320"/>
</dbReference>
<dbReference type="RefSeq" id="NP_596042.1">
    <property type="nucleotide sequence ID" value="NM_001021952.2"/>
</dbReference>
<dbReference type="SMR" id="Q09146"/>
<dbReference type="BioGRID" id="277464">
    <property type="interactions" value="5"/>
</dbReference>
<dbReference type="FunCoup" id="Q09146">
    <property type="interactions" value="8"/>
</dbReference>
<dbReference type="STRING" id="284812.Q09146"/>
<dbReference type="iPTMnet" id="Q09146"/>
<dbReference type="PaxDb" id="4896-SPBC365.13c.1"/>
<dbReference type="EnsemblFungi" id="SPBC365.13c.1">
    <property type="protein sequence ID" value="SPBC365.13c.1:pep"/>
    <property type="gene ID" value="SPBC365.13c"/>
</dbReference>
<dbReference type="PomBase" id="SPBC365.13c">
    <property type="gene designation" value="hba1"/>
</dbReference>
<dbReference type="VEuPathDB" id="FungiDB:SPBC365.13c"/>
<dbReference type="eggNOG" id="KOG0864">
    <property type="taxonomic scope" value="Eukaryota"/>
</dbReference>
<dbReference type="HOGENOM" id="CLU_057901_0_0_1"/>
<dbReference type="InParanoid" id="Q09146"/>
<dbReference type="OMA" id="NMDKRGV"/>
<dbReference type="Reactome" id="R-SPO-159227">
    <property type="pathway name" value="Transport of the SLBP independent Mature mRNA"/>
</dbReference>
<dbReference type="Reactome" id="R-SPO-159231">
    <property type="pathway name" value="Transport of Mature mRNA Derived from an Intronless Transcript"/>
</dbReference>
<dbReference type="Reactome" id="R-SPO-159236">
    <property type="pathway name" value="Transport of Mature mRNA derived from an Intron-Containing Transcript"/>
</dbReference>
<dbReference type="Reactome" id="R-SPO-3371453">
    <property type="pathway name" value="Regulation of HSF1-mediated heat shock response"/>
</dbReference>
<dbReference type="Reactome" id="R-SPO-4085377">
    <property type="pathway name" value="SUMOylation of SUMOylation proteins"/>
</dbReference>
<dbReference type="Reactome" id="R-SPO-4551638">
    <property type="pathway name" value="SUMOylation of chromatin organization proteins"/>
</dbReference>
<dbReference type="Reactome" id="R-SPO-4570464">
    <property type="pathway name" value="SUMOylation of RNA binding proteins"/>
</dbReference>
<dbReference type="Reactome" id="R-SPO-5578749">
    <property type="pathway name" value="Transcriptional regulation by small RNAs"/>
</dbReference>
<dbReference type="PRO" id="PR:Q09146"/>
<dbReference type="Proteomes" id="UP000002485">
    <property type="component" value="Chromosome II"/>
</dbReference>
<dbReference type="GO" id="GO:0005654">
    <property type="term" value="C:nucleoplasm"/>
    <property type="evidence" value="ECO:0000314"/>
    <property type="project" value="PomBase"/>
</dbReference>
<dbReference type="GO" id="GO:0005634">
    <property type="term" value="C:nucleus"/>
    <property type="evidence" value="ECO:0000314"/>
    <property type="project" value="PomBase"/>
</dbReference>
<dbReference type="GO" id="GO:0031267">
    <property type="term" value="F:small GTPase binding"/>
    <property type="evidence" value="ECO:0000255"/>
    <property type="project" value="PomBase"/>
</dbReference>
<dbReference type="GO" id="GO:0006611">
    <property type="term" value="P:protein export from nucleus"/>
    <property type="evidence" value="ECO:0000315"/>
    <property type="project" value="PomBase"/>
</dbReference>
<dbReference type="FunFam" id="2.30.29.30:FF:000454">
    <property type="entry name" value="Ran-specific GTPase-activating protein 2"/>
    <property type="match status" value="1"/>
</dbReference>
<dbReference type="Gene3D" id="2.30.29.30">
    <property type="entry name" value="Pleckstrin-homology domain (PH domain)/Phosphotyrosine-binding domain (PTB)"/>
    <property type="match status" value="1"/>
</dbReference>
<dbReference type="InterPro" id="IPR011993">
    <property type="entry name" value="PH-like_dom_sf"/>
</dbReference>
<dbReference type="InterPro" id="IPR000156">
    <property type="entry name" value="Ran_bind_dom"/>
</dbReference>
<dbReference type="InterPro" id="IPR045255">
    <property type="entry name" value="RanBP1-like"/>
</dbReference>
<dbReference type="PANTHER" id="PTHR23138">
    <property type="entry name" value="RAN BINDING PROTEIN"/>
    <property type="match status" value="1"/>
</dbReference>
<dbReference type="PANTHER" id="PTHR23138:SF142">
    <property type="entry name" value="RAN-BINDING PROTEIN 3B-RELATED"/>
    <property type="match status" value="1"/>
</dbReference>
<dbReference type="Pfam" id="PF00638">
    <property type="entry name" value="Ran_BP1"/>
    <property type="match status" value="1"/>
</dbReference>
<dbReference type="SMART" id="SM00160">
    <property type="entry name" value="RanBD"/>
    <property type="match status" value="1"/>
</dbReference>
<dbReference type="SUPFAM" id="SSF50729">
    <property type="entry name" value="PH domain-like"/>
    <property type="match status" value="1"/>
</dbReference>
<dbReference type="PROSITE" id="PS50196">
    <property type="entry name" value="RANBD1"/>
    <property type="match status" value="1"/>
</dbReference>